<feature type="chain" id="PRO_0000139059" description="CCA-adding enzyme">
    <location>
        <begin position="1"/>
        <end position="402"/>
    </location>
</feature>
<feature type="binding site" evidence="1">
    <location>
        <position position="32"/>
    </location>
    <ligand>
        <name>ATP</name>
        <dbReference type="ChEBI" id="CHEBI:30616"/>
    </ligand>
</feature>
<feature type="binding site" evidence="1">
    <location>
        <position position="32"/>
    </location>
    <ligand>
        <name>CTP</name>
        <dbReference type="ChEBI" id="CHEBI:37563"/>
    </ligand>
</feature>
<feature type="binding site" evidence="1">
    <location>
        <position position="35"/>
    </location>
    <ligand>
        <name>ATP</name>
        <dbReference type="ChEBI" id="CHEBI:30616"/>
    </ligand>
</feature>
<feature type="binding site" evidence="1">
    <location>
        <position position="35"/>
    </location>
    <ligand>
        <name>CTP</name>
        <dbReference type="ChEBI" id="CHEBI:37563"/>
    </ligand>
</feature>
<feature type="binding site" evidence="1">
    <location>
        <position position="45"/>
    </location>
    <ligand>
        <name>Mg(2+)</name>
        <dbReference type="ChEBI" id="CHEBI:18420"/>
    </ligand>
</feature>
<feature type="binding site" evidence="1">
    <location>
        <position position="47"/>
    </location>
    <ligand>
        <name>Mg(2+)</name>
        <dbReference type="ChEBI" id="CHEBI:18420"/>
    </ligand>
</feature>
<feature type="binding site" evidence="1">
    <location>
        <position position="116"/>
    </location>
    <ligand>
        <name>ATP</name>
        <dbReference type="ChEBI" id="CHEBI:30616"/>
    </ligand>
</feature>
<feature type="binding site" evidence="1">
    <location>
        <position position="116"/>
    </location>
    <ligand>
        <name>CTP</name>
        <dbReference type="ChEBI" id="CHEBI:37563"/>
    </ligand>
</feature>
<feature type="binding site" evidence="1">
    <location>
        <position position="159"/>
    </location>
    <ligand>
        <name>ATP</name>
        <dbReference type="ChEBI" id="CHEBI:30616"/>
    </ligand>
</feature>
<feature type="binding site" evidence="1">
    <location>
        <position position="159"/>
    </location>
    <ligand>
        <name>CTP</name>
        <dbReference type="ChEBI" id="CHEBI:37563"/>
    </ligand>
</feature>
<feature type="binding site" evidence="1">
    <location>
        <position position="162"/>
    </location>
    <ligand>
        <name>ATP</name>
        <dbReference type="ChEBI" id="CHEBI:30616"/>
    </ligand>
</feature>
<feature type="binding site" evidence="1">
    <location>
        <position position="162"/>
    </location>
    <ligand>
        <name>CTP</name>
        <dbReference type="ChEBI" id="CHEBI:37563"/>
    </ligand>
</feature>
<feature type="binding site" evidence="1">
    <location>
        <position position="165"/>
    </location>
    <ligand>
        <name>ATP</name>
        <dbReference type="ChEBI" id="CHEBI:30616"/>
    </ligand>
</feature>
<feature type="binding site" evidence="1">
    <location>
        <position position="165"/>
    </location>
    <ligand>
        <name>CTP</name>
        <dbReference type="ChEBI" id="CHEBI:37563"/>
    </ligand>
</feature>
<feature type="binding site" evidence="1">
    <location>
        <position position="168"/>
    </location>
    <ligand>
        <name>ATP</name>
        <dbReference type="ChEBI" id="CHEBI:30616"/>
    </ligand>
</feature>
<feature type="binding site" evidence="1">
    <location>
        <position position="168"/>
    </location>
    <ligand>
        <name>CTP</name>
        <dbReference type="ChEBI" id="CHEBI:37563"/>
    </ligand>
</feature>
<evidence type="ECO:0000255" key="1">
    <source>
        <dbReference type="HAMAP-Rule" id="MF_01263"/>
    </source>
</evidence>
<protein>
    <recommendedName>
        <fullName evidence="1">CCA-adding enzyme</fullName>
        <ecNumber evidence="1">2.7.7.72</ecNumber>
    </recommendedName>
    <alternativeName>
        <fullName evidence="1">CCA tRNA nucleotidyltransferase</fullName>
    </alternativeName>
    <alternativeName>
        <fullName evidence="1">tRNA CCA-pyrophosphorylase</fullName>
    </alternativeName>
    <alternativeName>
        <fullName evidence="1">tRNA adenylyl-/cytidylyl- transferase</fullName>
    </alternativeName>
    <alternativeName>
        <fullName evidence="1">tRNA nucleotidyltransferase</fullName>
    </alternativeName>
    <alternativeName>
        <fullName evidence="1">tRNA-NT</fullName>
    </alternativeName>
</protein>
<accession>P0DA18</accession>
<accession>Q79WV5</accession>
<accession>Q8K7W5</accession>
<dbReference type="EC" id="2.7.7.72" evidence="1"/>
<dbReference type="EMBL" id="AE014074">
    <property type="protein sequence ID" value="AAM79194.1"/>
    <property type="molecule type" value="Genomic_DNA"/>
</dbReference>
<dbReference type="RefSeq" id="WP_002990193.1">
    <property type="nucleotide sequence ID" value="NC_004070.1"/>
</dbReference>
<dbReference type="SMR" id="P0DA18"/>
<dbReference type="KEGG" id="spg:SpyM3_0587"/>
<dbReference type="HOGENOM" id="CLU_015961_3_1_9"/>
<dbReference type="Proteomes" id="UP000000564">
    <property type="component" value="Chromosome"/>
</dbReference>
<dbReference type="GO" id="GO:0005524">
    <property type="term" value="F:ATP binding"/>
    <property type="evidence" value="ECO:0007669"/>
    <property type="project" value="UniProtKB-UniRule"/>
</dbReference>
<dbReference type="GO" id="GO:0004810">
    <property type="term" value="F:CCA tRNA nucleotidyltransferase activity"/>
    <property type="evidence" value="ECO:0007669"/>
    <property type="project" value="UniProtKB-UniRule"/>
</dbReference>
<dbReference type="GO" id="GO:0000287">
    <property type="term" value="F:magnesium ion binding"/>
    <property type="evidence" value="ECO:0007669"/>
    <property type="project" value="UniProtKB-UniRule"/>
</dbReference>
<dbReference type="GO" id="GO:0000049">
    <property type="term" value="F:tRNA binding"/>
    <property type="evidence" value="ECO:0007669"/>
    <property type="project" value="UniProtKB-UniRule"/>
</dbReference>
<dbReference type="GO" id="GO:0042245">
    <property type="term" value="P:RNA repair"/>
    <property type="evidence" value="ECO:0007669"/>
    <property type="project" value="UniProtKB-KW"/>
</dbReference>
<dbReference type="GO" id="GO:0001680">
    <property type="term" value="P:tRNA 3'-terminal CCA addition"/>
    <property type="evidence" value="ECO:0007669"/>
    <property type="project" value="UniProtKB-UniRule"/>
</dbReference>
<dbReference type="CDD" id="cd05398">
    <property type="entry name" value="NT_ClassII-CCAase"/>
    <property type="match status" value="1"/>
</dbReference>
<dbReference type="Gene3D" id="1.10.110.30">
    <property type="match status" value="1"/>
</dbReference>
<dbReference type="Gene3D" id="1.10.246.80">
    <property type="match status" value="1"/>
</dbReference>
<dbReference type="Gene3D" id="1.20.58.560">
    <property type="match status" value="1"/>
</dbReference>
<dbReference type="Gene3D" id="3.30.460.10">
    <property type="entry name" value="Beta Polymerase, domain 2"/>
    <property type="match status" value="1"/>
</dbReference>
<dbReference type="HAMAP" id="MF_01263">
    <property type="entry name" value="CCA_bact_type3"/>
    <property type="match status" value="1"/>
</dbReference>
<dbReference type="InterPro" id="IPR050264">
    <property type="entry name" value="Bact_CCA-adding_enz_type3_sf"/>
</dbReference>
<dbReference type="InterPro" id="IPR032810">
    <property type="entry name" value="CCA-adding_enz_C"/>
</dbReference>
<dbReference type="InterPro" id="IPR023068">
    <property type="entry name" value="CCA-adding_enz_firmicutes"/>
</dbReference>
<dbReference type="InterPro" id="IPR043519">
    <property type="entry name" value="NT_sf"/>
</dbReference>
<dbReference type="InterPro" id="IPR002646">
    <property type="entry name" value="PolA_pol_head_dom"/>
</dbReference>
<dbReference type="InterPro" id="IPR032828">
    <property type="entry name" value="PolyA_RNA-bd"/>
</dbReference>
<dbReference type="NCBIfam" id="NF009814">
    <property type="entry name" value="PRK13299.1"/>
    <property type="match status" value="1"/>
</dbReference>
<dbReference type="PANTHER" id="PTHR46173">
    <property type="entry name" value="CCA TRNA NUCLEOTIDYLTRANSFERASE 1, MITOCHONDRIAL"/>
    <property type="match status" value="1"/>
</dbReference>
<dbReference type="PANTHER" id="PTHR46173:SF1">
    <property type="entry name" value="CCA TRNA NUCLEOTIDYLTRANSFERASE 1, MITOCHONDRIAL"/>
    <property type="match status" value="1"/>
</dbReference>
<dbReference type="Pfam" id="PF01743">
    <property type="entry name" value="PolyA_pol"/>
    <property type="match status" value="1"/>
</dbReference>
<dbReference type="Pfam" id="PF12627">
    <property type="entry name" value="PolyA_pol_RNAbd"/>
    <property type="match status" value="1"/>
</dbReference>
<dbReference type="Pfam" id="PF13735">
    <property type="entry name" value="tRNA_NucTran2_2"/>
    <property type="match status" value="1"/>
</dbReference>
<dbReference type="SUPFAM" id="SSF81301">
    <property type="entry name" value="Nucleotidyltransferase"/>
    <property type="match status" value="1"/>
</dbReference>
<dbReference type="SUPFAM" id="SSF81891">
    <property type="entry name" value="Poly A polymerase C-terminal region-like"/>
    <property type="match status" value="1"/>
</dbReference>
<comment type="function">
    <text evidence="1">Catalyzes the addition and repair of the essential 3'-terminal CCA sequence in tRNAs without using a nucleic acid template. Adds these three nucleotides in the order of C, C, and A to the tRNA nucleotide-73, using CTP and ATP as substrates and producing inorganic pyrophosphate. tRNA 3'-terminal CCA addition is required both for tRNA processing and repair. Also involved in tRNA surveillance by mediating tandem CCA addition to generate a CCACCA at the 3' terminus of unstable tRNAs. While stable tRNAs receive only 3'-terminal CCA, unstable tRNAs are marked with CCACCA and rapidly degraded.</text>
</comment>
<comment type="catalytic activity">
    <reaction evidence="1">
        <text>a tRNA precursor + 2 CTP + ATP = a tRNA with a 3' CCA end + 3 diphosphate</text>
        <dbReference type="Rhea" id="RHEA:14433"/>
        <dbReference type="Rhea" id="RHEA-COMP:10465"/>
        <dbReference type="Rhea" id="RHEA-COMP:10468"/>
        <dbReference type="ChEBI" id="CHEBI:30616"/>
        <dbReference type="ChEBI" id="CHEBI:33019"/>
        <dbReference type="ChEBI" id="CHEBI:37563"/>
        <dbReference type="ChEBI" id="CHEBI:74896"/>
        <dbReference type="ChEBI" id="CHEBI:83071"/>
        <dbReference type="EC" id="2.7.7.72"/>
    </reaction>
</comment>
<comment type="catalytic activity">
    <reaction evidence="1">
        <text>a tRNA with a 3' CCA end + 2 CTP + ATP = a tRNA with a 3' CCACCA end + 3 diphosphate</text>
        <dbReference type="Rhea" id="RHEA:76235"/>
        <dbReference type="Rhea" id="RHEA-COMP:10468"/>
        <dbReference type="Rhea" id="RHEA-COMP:18655"/>
        <dbReference type="ChEBI" id="CHEBI:30616"/>
        <dbReference type="ChEBI" id="CHEBI:33019"/>
        <dbReference type="ChEBI" id="CHEBI:37563"/>
        <dbReference type="ChEBI" id="CHEBI:83071"/>
        <dbReference type="ChEBI" id="CHEBI:195187"/>
    </reaction>
    <physiologicalReaction direction="left-to-right" evidence="1">
        <dbReference type="Rhea" id="RHEA:76236"/>
    </physiologicalReaction>
</comment>
<comment type="cofactor">
    <cofactor evidence="1">
        <name>Mg(2+)</name>
        <dbReference type="ChEBI" id="CHEBI:18420"/>
    </cofactor>
</comment>
<comment type="subunit">
    <text evidence="1">Homodimer.</text>
</comment>
<comment type="miscellaneous">
    <text evidence="1">A single active site specifically recognizes both ATP and CTP and is responsible for their addition.</text>
</comment>
<comment type="similarity">
    <text evidence="1">Belongs to the tRNA nucleotidyltransferase/poly(A) polymerase family. Bacterial CCA-adding enzyme type 3 subfamily.</text>
</comment>
<organism>
    <name type="scientific">Streptococcus pyogenes serotype M3 (strain ATCC BAA-595 / MGAS315)</name>
    <dbReference type="NCBI Taxonomy" id="198466"/>
    <lineage>
        <taxon>Bacteria</taxon>
        <taxon>Bacillati</taxon>
        <taxon>Bacillota</taxon>
        <taxon>Bacilli</taxon>
        <taxon>Lactobacillales</taxon>
        <taxon>Streptococcaceae</taxon>
        <taxon>Streptococcus</taxon>
    </lineage>
</organism>
<proteinExistence type="inferred from homology"/>
<gene>
    <name evidence="1" type="primary">cca</name>
    <name type="ordered locus">SpyM3_0587</name>
</gene>
<reference key="1">
    <citation type="journal article" date="2002" name="Proc. Natl. Acad. Sci. U.S.A.">
        <title>Genome sequence of a serotype M3 strain of group A Streptococcus: phage-encoded toxins, the high-virulence phenotype, and clone emergence.</title>
        <authorList>
            <person name="Beres S.B."/>
            <person name="Sylva G.L."/>
            <person name="Barbian K.D."/>
            <person name="Lei B."/>
            <person name="Hoff J.S."/>
            <person name="Mammarella N.D."/>
            <person name="Liu M.-Y."/>
            <person name="Smoot J.C."/>
            <person name="Porcella S.F."/>
            <person name="Parkins L.D."/>
            <person name="Campbell D.S."/>
            <person name="Smith T.M."/>
            <person name="McCormick J.K."/>
            <person name="Leung D.Y.M."/>
            <person name="Schlievert P.M."/>
            <person name="Musser J.M."/>
        </authorList>
    </citation>
    <scope>NUCLEOTIDE SEQUENCE [LARGE SCALE GENOMIC DNA]</scope>
    <source>
        <strain>ATCC BAA-595 / MGAS315</strain>
    </source>
</reference>
<keyword id="KW-0067">ATP-binding</keyword>
<keyword id="KW-0460">Magnesium</keyword>
<keyword id="KW-0479">Metal-binding</keyword>
<keyword id="KW-0547">Nucleotide-binding</keyword>
<keyword id="KW-0548">Nucleotidyltransferase</keyword>
<keyword id="KW-0692">RNA repair</keyword>
<keyword id="KW-0694">RNA-binding</keyword>
<keyword id="KW-0808">Transferase</keyword>
<keyword id="KW-0819">tRNA processing</keyword>
<name>CCA_STRP3</name>
<sequence>MKLMTMPSEFQKALPILTKIKEAGYEAYFVGGSVRDVLLERPIHDVDIATSSYPEETKAIFNRTVDVGIEHGTVLVLENGGEYEITTFRTEDVYVDYRRPSQVSFVRSLEEDLKRRDFTVNALALDENGQVIDKFRGLIDLEQKRLRAVGKAEERFEEDALRIMRGFRFAASLDFDIEAATFEAMRSHSPLLEKISVERSFTEFDKLLMAPHWRKGISAMIACQAYDYLPGLKQQEAGLNHLIVSLKDNFTFSDHHQAWAYVMISLAIEDPKSFLKAWKTSNDFQRYVTKLIALYRIRQERSFEKLDIYQYGKEMASLVEGLRKAQSLSVDMDHIEALDQALAIHNKYDIVLNGSHLIKDFGMKPGPQLGLMLEKVELAIVEGRLDNDFTTIEAFVREELAT</sequence>